<evidence type="ECO:0000255" key="1">
    <source>
        <dbReference type="HAMAP-Rule" id="MF_00315"/>
    </source>
</evidence>
<name>DXS_HALOH</name>
<organism>
    <name type="scientific">Halothermothrix orenii (strain H 168 / OCM 544 / DSM 9562)</name>
    <dbReference type="NCBI Taxonomy" id="373903"/>
    <lineage>
        <taxon>Bacteria</taxon>
        <taxon>Bacillati</taxon>
        <taxon>Bacillota</taxon>
        <taxon>Clostridia</taxon>
        <taxon>Halanaerobiales</taxon>
        <taxon>Halothermotrichaceae</taxon>
        <taxon>Halothermothrix</taxon>
    </lineage>
</organism>
<sequence length="636" mass="70037">MGNIFDKVNSPEDLKSLNIEDLNSLAQEVRKFIIETVADTGGHLASNLGVVELTLALHYHLNSPKDKIIWDVGHQSYTHKILTGRKKKFHTIRQYKGLSGFPKYSESIHDVIETGHSSTSISAALGLALARDLKNRNDRIYAVIGDGALTGGMAFEALNHAGHLGTDIKVVLNDNAMSISKNVGALSHYLSRIRTDPTLSKFKDDVEVLLSRIPKIGNTVSRSVERVKDGLKYLFLSGVLFEEMGFTYMGPLDGHNIQELITNFKNADNIKGPVLIHVNTKKGKGYKPAESQPSKFHGVSPFKIDNGESKRKKSNFTYSQVFGQTMVKLGNKDKKIVGITAAMPEGTGLSYFKKEFPDRFFDVGIAEQHAVTLATGMARAGMKPVVAIYSTFLQRAYDQVIHDACIQNLPVTFAIDRAGIVGADGETHHGLFDLSFLRAIPNIIIMAPKNENELQHMIYTAINNDQPVAIRYPRGEGYGVELDNDFSTIPIGKGELLCDGKDVLIIAVGSRVYPAMEAARVLSQQGIKAAVINARFIKPLDKNLILNKINECKKVITVEEHALKGGFGSAILEFINENDLRGIKVKRLGLPDRFLPHGPTGHLQTIYHIDKNAIIESALKLVDERVELGLWPGKNA</sequence>
<dbReference type="EC" id="2.2.1.7" evidence="1"/>
<dbReference type="EMBL" id="CP001098">
    <property type="protein sequence ID" value="ACL69410.1"/>
    <property type="molecule type" value="Genomic_DNA"/>
</dbReference>
<dbReference type="RefSeq" id="WP_012635598.1">
    <property type="nucleotide sequence ID" value="NC_011899.1"/>
</dbReference>
<dbReference type="SMR" id="B8D2I3"/>
<dbReference type="STRING" id="373903.Hore_06530"/>
<dbReference type="KEGG" id="hor:Hore_06530"/>
<dbReference type="eggNOG" id="COG1154">
    <property type="taxonomic scope" value="Bacteria"/>
</dbReference>
<dbReference type="HOGENOM" id="CLU_009227_1_4_9"/>
<dbReference type="OrthoDB" id="9803371at2"/>
<dbReference type="UniPathway" id="UPA00064">
    <property type="reaction ID" value="UER00091"/>
</dbReference>
<dbReference type="Proteomes" id="UP000000719">
    <property type="component" value="Chromosome"/>
</dbReference>
<dbReference type="GO" id="GO:0005829">
    <property type="term" value="C:cytosol"/>
    <property type="evidence" value="ECO:0007669"/>
    <property type="project" value="TreeGrafter"/>
</dbReference>
<dbReference type="GO" id="GO:0008661">
    <property type="term" value="F:1-deoxy-D-xylulose-5-phosphate synthase activity"/>
    <property type="evidence" value="ECO:0007669"/>
    <property type="project" value="UniProtKB-UniRule"/>
</dbReference>
<dbReference type="GO" id="GO:0000287">
    <property type="term" value="F:magnesium ion binding"/>
    <property type="evidence" value="ECO:0007669"/>
    <property type="project" value="UniProtKB-UniRule"/>
</dbReference>
<dbReference type="GO" id="GO:0030976">
    <property type="term" value="F:thiamine pyrophosphate binding"/>
    <property type="evidence" value="ECO:0007669"/>
    <property type="project" value="UniProtKB-UniRule"/>
</dbReference>
<dbReference type="GO" id="GO:0052865">
    <property type="term" value="P:1-deoxy-D-xylulose 5-phosphate biosynthetic process"/>
    <property type="evidence" value="ECO:0007669"/>
    <property type="project" value="UniProtKB-UniPathway"/>
</dbReference>
<dbReference type="GO" id="GO:0019288">
    <property type="term" value="P:isopentenyl diphosphate biosynthetic process, methylerythritol 4-phosphate pathway"/>
    <property type="evidence" value="ECO:0007669"/>
    <property type="project" value="TreeGrafter"/>
</dbReference>
<dbReference type="GO" id="GO:0016114">
    <property type="term" value="P:terpenoid biosynthetic process"/>
    <property type="evidence" value="ECO:0007669"/>
    <property type="project" value="UniProtKB-UniRule"/>
</dbReference>
<dbReference type="GO" id="GO:0009228">
    <property type="term" value="P:thiamine biosynthetic process"/>
    <property type="evidence" value="ECO:0007669"/>
    <property type="project" value="UniProtKB-UniRule"/>
</dbReference>
<dbReference type="CDD" id="cd02007">
    <property type="entry name" value="TPP_DXS"/>
    <property type="match status" value="1"/>
</dbReference>
<dbReference type="CDD" id="cd07033">
    <property type="entry name" value="TPP_PYR_DXS_TK_like"/>
    <property type="match status" value="1"/>
</dbReference>
<dbReference type="FunFam" id="3.40.50.920:FF:000002">
    <property type="entry name" value="1-deoxy-D-xylulose-5-phosphate synthase"/>
    <property type="match status" value="1"/>
</dbReference>
<dbReference type="FunFam" id="3.40.50.970:FF:000030">
    <property type="entry name" value="1-deoxy-D-xylulose-5-phosphate synthase"/>
    <property type="match status" value="1"/>
</dbReference>
<dbReference type="Gene3D" id="3.40.50.920">
    <property type="match status" value="1"/>
</dbReference>
<dbReference type="Gene3D" id="3.40.50.970">
    <property type="match status" value="2"/>
</dbReference>
<dbReference type="HAMAP" id="MF_00315">
    <property type="entry name" value="DXP_synth"/>
    <property type="match status" value="1"/>
</dbReference>
<dbReference type="InterPro" id="IPR005477">
    <property type="entry name" value="Dxylulose-5-P_synthase"/>
</dbReference>
<dbReference type="InterPro" id="IPR029061">
    <property type="entry name" value="THDP-binding"/>
</dbReference>
<dbReference type="InterPro" id="IPR009014">
    <property type="entry name" value="Transketo_C/PFOR_II"/>
</dbReference>
<dbReference type="InterPro" id="IPR005475">
    <property type="entry name" value="Transketolase-like_Pyr-bd"/>
</dbReference>
<dbReference type="InterPro" id="IPR020826">
    <property type="entry name" value="Transketolase_BS"/>
</dbReference>
<dbReference type="InterPro" id="IPR033248">
    <property type="entry name" value="Transketolase_C"/>
</dbReference>
<dbReference type="InterPro" id="IPR049557">
    <property type="entry name" value="Transketolase_CS"/>
</dbReference>
<dbReference type="NCBIfam" id="TIGR00204">
    <property type="entry name" value="dxs"/>
    <property type="match status" value="1"/>
</dbReference>
<dbReference type="NCBIfam" id="NF003933">
    <property type="entry name" value="PRK05444.2-2"/>
    <property type="match status" value="1"/>
</dbReference>
<dbReference type="PANTHER" id="PTHR43322">
    <property type="entry name" value="1-D-DEOXYXYLULOSE 5-PHOSPHATE SYNTHASE-RELATED"/>
    <property type="match status" value="1"/>
</dbReference>
<dbReference type="PANTHER" id="PTHR43322:SF5">
    <property type="entry name" value="1-DEOXY-D-XYLULOSE-5-PHOSPHATE SYNTHASE, CHLOROPLASTIC"/>
    <property type="match status" value="1"/>
</dbReference>
<dbReference type="Pfam" id="PF13292">
    <property type="entry name" value="DXP_synthase_N"/>
    <property type="match status" value="1"/>
</dbReference>
<dbReference type="Pfam" id="PF02779">
    <property type="entry name" value="Transket_pyr"/>
    <property type="match status" value="1"/>
</dbReference>
<dbReference type="Pfam" id="PF02780">
    <property type="entry name" value="Transketolase_C"/>
    <property type="match status" value="1"/>
</dbReference>
<dbReference type="SMART" id="SM00861">
    <property type="entry name" value="Transket_pyr"/>
    <property type="match status" value="1"/>
</dbReference>
<dbReference type="SUPFAM" id="SSF52518">
    <property type="entry name" value="Thiamin diphosphate-binding fold (THDP-binding)"/>
    <property type="match status" value="2"/>
</dbReference>
<dbReference type="SUPFAM" id="SSF52922">
    <property type="entry name" value="TK C-terminal domain-like"/>
    <property type="match status" value="1"/>
</dbReference>
<dbReference type="PROSITE" id="PS00801">
    <property type="entry name" value="TRANSKETOLASE_1"/>
    <property type="match status" value="1"/>
</dbReference>
<dbReference type="PROSITE" id="PS00802">
    <property type="entry name" value="TRANSKETOLASE_2"/>
    <property type="match status" value="1"/>
</dbReference>
<protein>
    <recommendedName>
        <fullName evidence="1">1-deoxy-D-xylulose-5-phosphate synthase</fullName>
        <ecNumber evidence="1">2.2.1.7</ecNumber>
    </recommendedName>
    <alternativeName>
        <fullName evidence="1">1-deoxyxylulose-5-phosphate synthase</fullName>
        <shortName evidence="1">DXP synthase</shortName>
        <shortName evidence="1">DXPS</shortName>
    </alternativeName>
</protein>
<reference key="1">
    <citation type="journal article" date="2009" name="PLoS ONE">
        <title>Genome analysis of the anaerobic thermohalophilic bacterium Halothermothrix orenii.</title>
        <authorList>
            <person name="Mavromatis K."/>
            <person name="Ivanova N."/>
            <person name="Anderson I."/>
            <person name="Lykidis A."/>
            <person name="Hooper S.D."/>
            <person name="Sun H."/>
            <person name="Kunin V."/>
            <person name="Lapidus A."/>
            <person name="Hugenholtz P."/>
            <person name="Patel B."/>
            <person name="Kyrpides N.C."/>
        </authorList>
    </citation>
    <scope>NUCLEOTIDE SEQUENCE [LARGE SCALE GENOMIC DNA]</scope>
    <source>
        <strain>H 168 / OCM 544 / DSM 9562</strain>
    </source>
</reference>
<feature type="chain" id="PRO_1000132936" description="1-deoxy-D-xylulose-5-phosphate synthase">
    <location>
        <begin position="1"/>
        <end position="636"/>
    </location>
</feature>
<feature type="binding site" evidence="1">
    <location>
        <position position="74"/>
    </location>
    <ligand>
        <name>thiamine diphosphate</name>
        <dbReference type="ChEBI" id="CHEBI:58937"/>
    </ligand>
</feature>
<feature type="binding site" evidence="1">
    <location>
        <begin position="115"/>
        <end position="117"/>
    </location>
    <ligand>
        <name>thiamine diphosphate</name>
        <dbReference type="ChEBI" id="CHEBI:58937"/>
    </ligand>
</feature>
<feature type="binding site" evidence="1">
    <location>
        <position position="146"/>
    </location>
    <ligand>
        <name>Mg(2+)</name>
        <dbReference type="ChEBI" id="CHEBI:18420"/>
    </ligand>
</feature>
<feature type="binding site" evidence="1">
    <location>
        <begin position="147"/>
        <end position="148"/>
    </location>
    <ligand>
        <name>thiamine diphosphate</name>
        <dbReference type="ChEBI" id="CHEBI:58937"/>
    </ligand>
</feature>
<feature type="binding site" evidence="1">
    <location>
        <position position="175"/>
    </location>
    <ligand>
        <name>Mg(2+)</name>
        <dbReference type="ChEBI" id="CHEBI:18420"/>
    </ligand>
</feature>
<feature type="binding site" evidence="1">
    <location>
        <position position="175"/>
    </location>
    <ligand>
        <name>thiamine diphosphate</name>
        <dbReference type="ChEBI" id="CHEBI:58937"/>
    </ligand>
</feature>
<feature type="binding site" evidence="1">
    <location>
        <position position="286"/>
    </location>
    <ligand>
        <name>thiamine diphosphate</name>
        <dbReference type="ChEBI" id="CHEBI:58937"/>
    </ligand>
</feature>
<feature type="binding site" evidence="1">
    <location>
        <position position="367"/>
    </location>
    <ligand>
        <name>thiamine diphosphate</name>
        <dbReference type="ChEBI" id="CHEBI:58937"/>
    </ligand>
</feature>
<keyword id="KW-0414">Isoprene biosynthesis</keyword>
<keyword id="KW-0460">Magnesium</keyword>
<keyword id="KW-0479">Metal-binding</keyword>
<keyword id="KW-1185">Reference proteome</keyword>
<keyword id="KW-0784">Thiamine biosynthesis</keyword>
<keyword id="KW-0786">Thiamine pyrophosphate</keyword>
<keyword id="KW-0808">Transferase</keyword>
<accession>B8D2I3</accession>
<gene>
    <name evidence="1" type="primary">dxs</name>
    <name type="ordered locus">Hore_06530</name>
</gene>
<comment type="function">
    <text evidence="1">Catalyzes the acyloin condensation reaction between C atoms 2 and 3 of pyruvate and glyceraldehyde 3-phosphate to yield 1-deoxy-D-xylulose-5-phosphate (DXP).</text>
</comment>
<comment type="catalytic activity">
    <reaction evidence="1">
        <text>D-glyceraldehyde 3-phosphate + pyruvate + H(+) = 1-deoxy-D-xylulose 5-phosphate + CO2</text>
        <dbReference type="Rhea" id="RHEA:12605"/>
        <dbReference type="ChEBI" id="CHEBI:15361"/>
        <dbReference type="ChEBI" id="CHEBI:15378"/>
        <dbReference type="ChEBI" id="CHEBI:16526"/>
        <dbReference type="ChEBI" id="CHEBI:57792"/>
        <dbReference type="ChEBI" id="CHEBI:59776"/>
        <dbReference type="EC" id="2.2.1.7"/>
    </reaction>
</comment>
<comment type="cofactor">
    <cofactor evidence="1">
        <name>Mg(2+)</name>
        <dbReference type="ChEBI" id="CHEBI:18420"/>
    </cofactor>
    <text evidence="1">Binds 1 Mg(2+) ion per subunit.</text>
</comment>
<comment type="cofactor">
    <cofactor evidence="1">
        <name>thiamine diphosphate</name>
        <dbReference type="ChEBI" id="CHEBI:58937"/>
    </cofactor>
    <text evidence="1">Binds 1 thiamine pyrophosphate per subunit.</text>
</comment>
<comment type="pathway">
    <text evidence="1">Metabolic intermediate biosynthesis; 1-deoxy-D-xylulose 5-phosphate biosynthesis; 1-deoxy-D-xylulose 5-phosphate from D-glyceraldehyde 3-phosphate and pyruvate: step 1/1.</text>
</comment>
<comment type="subunit">
    <text evidence="1">Homodimer.</text>
</comment>
<comment type="similarity">
    <text evidence="1">Belongs to the transketolase family. DXPS subfamily.</text>
</comment>
<proteinExistence type="inferred from homology"/>